<feature type="chain" id="PRO_0000201286" description="Cardiolipin synthase B">
    <location>
        <begin position="1"/>
        <end position="413"/>
    </location>
</feature>
<feature type="domain" description="PLD phosphodiesterase 1" evidence="1">
    <location>
        <begin position="108"/>
        <end position="135"/>
    </location>
</feature>
<feature type="domain" description="PLD phosphodiesterase 2" evidence="1">
    <location>
        <begin position="285"/>
        <end position="312"/>
    </location>
</feature>
<feature type="region of interest" description="Disordered" evidence="2">
    <location>
        <begin position="388"/>
        <end position="413"/>
    </location>
</feature>
<feature type="active site" evidence="1">
    <location>
        <position position="113"/>
    </location>
</feature>
<feature type="active site" evidence="1">
    <location>
        <position position="115"/>
    </location>
</feature>
<feature type="active site" evidence="1">
    <location>
        <position position="120"/>
    </location>
</feature>
<feature type="active site" evidence="1">
    <location>
        <position position="290"/>
    </location>
</feature>
<feature type="active site" evidence="1">
    <location>
        <position position="292"/>
    </location>
</feature>
<feature type="active site" evidence="1">
    <location>
        <position position="297"/>
    </location>
</feature>
<reference key="1">
    <citation type="journal article" date="2001" name="Nature">
        <title>Complete genome sequence of a multiple drug resistant Salmonella enterica serovar Typhi CT18.</title>
        <authorList>
            <person name="Parkhill J."/>
            <person name="Dougan G."/>
            <person name="James K.D."/>
            <person name="Thomson N.R."/>
            <person name="Pickard D."/>
            <person name="Wain J."/>
            <person name="Churcher C.M."/>
            <person name="Mungall K.L."/>
            <person name="Bentley S.D."/>
            <person name="Holden M.T.G."/>
            <person name="Sebaihia M."/>
            <person name="Baker S."/>
            <person name="Basham D."/>
            <person name="Brooks K."/>
            <person name="Chillingworth T."/>
            <person name="Connerton P."/>
            <person name="Cronin A."/>
            <person name="Davis P."/>
            <person name="Davies R.M."/>
            <person name="Dowd L."/>
            <person name="White N."/>
            <person name="Farrar J."/>
            <person name="Feltwell T."/>
            <person name="Hamlin N."/>
            <person name="Haque A."/>
            <person name="Hien T.T."/>
            <person name="Holroyd S."/>
            <person name="Jagels K."/>
            <person name="Krogh A."/>
            <person name="Larsen T.S."/>
            <person name="Leather S."/>
            <person name="Moule S."/>
            <person name="O'Gaora P."/>
            <person name="Parry C."/>
            <person name="Quail M.A."/>
            <person name="Rutherford K.M."/>
            <person name="Simmonds M."/>
            <person name="Skelton J."/>
            <person name="Stevens K."/>
            <person name="Whitehead S."/>
            <person name="Barrell B.G."/>
        </authorList>
    </citation>
    <scope>NUCLEOTIDE SEQUENCE [LARGE SCALE GENOMIC DNA]</scope>
    <source>
        <strain>CT18</strain>
    </source>
</reference>
<reference key="2">
    <citation type="journal article" date="2003" name="J. Bacteriol.">
        <title>Comparative genomics of Salmonella enterica serovar Typhi strains Ty2 and CT18.</title>
        <authorList>
            <person name="Deng W."/>
            <person name="Liou S.-R."/>
            <person name="Plunkett G. III"/>
            <person name="Mayhew G.F."/>
            <person name="Rose D.J."/>
            <person name="Burland V."/>
            <person name="Kodoyianni V."/>
            <person name="Schwartz D.C."/>
            <person name="Blattner F.R."/>
        </authorList>
    </citation>
    <scope>NUCLEOTIDE SEQUENCE [LARGE SCALE GENOMIC DNA]</scope>
    <source>
        <strain>ATCC 700931 / Ty2</strain>
    </source>
</reference>
<keyword id="KW-1003">Cell membrane</keyword>
<keyword id="KW-0444">Lipid biosynthesis</keyword>
<keyword id="KW-0443">Lipid metabolism</keyword>
<keyword id="KW-0472">Membrane</keyword>
<keyword id="KW-0594">Phospholipid biosynthesis</keyword>
<keyword id="KW-1208">Phospholipid metabolism</keyword>
<keyword id="KW-0677">Repeat</keyword>
<keyword id="KW-0808">Transferase</keyword>
<protein>
    <recommendedName>
        <fullName evidence="1">Cardiolipin synthase B</fullName>
        <shortName evidence="1">CL synthase</shortName>
        <ecNumber evidence="1">2.7.8.-</ecNumber>
    </recommendedName>
</protein>
<evidence type="ECO:0000255" key="1">
    <source>
        <dbReference type="HAMAP-Rule" id="MF_01917"/>
    </source>
</evidence>
<evidence type="ECO:0000256" key="2">
    <source>
        <dbReference type="SAM" id="MobiDB-lite"/>
    </source>
</evidence>
<sequence>MKCGWREGNQIQLLENGDQFYPAVFEAIAQAQQKIILETFILFEDEVGKKLHAALLKAAQRGVKAEVLLDGYGSPDLSDAFVGELTSAGVIFRYYDPRPRLLGLRTNIFRRMHRKIVVIDDRIAFVGGINYSAEHMSDYGPQAKQDYAVRVEGPVVADILQFEVENLPGQSPARRWWKRHHQAEENRHPGEAQALFVWRDNEEHRDDIERHYLKMLTQAKREVIIANAYFFPGYRLLHAMRKAARRGVSVKLIVQGEPDMPIVKVGARLLYNYLVKGGVQVYEYRRRPLHGKVALMDDHWATVGSSNLDPLSLSLNLEANLIIHDRTFNQTLRDNLQGIIVNDCKQVDESMLPKRTWWNLTKSVLAFHFLRHFPALVGWLPAHTPHLAQVPPPAQPEMETQDRVDPENSGVKP</sequence>
<proteinExistence type="inferred from homology"/>
<name>CLSB_SALTI</name>
<comment type="function">
    <text evidence="1">Catalyzes the phosphatidyl group transfer from one phosphatidylglycerol molecule to another to form cardiolipin (CL) (diphosphatidylglycerol) and glycerol.</text>
</comment>
<comment type="catalytic activity">
    <reaction evidence="1">
        <text>2 a 1,2-diacyl-sn-glycero-3-phospho-(1'-sn-glycerol) = a cardiolipin + glycerol</text>
        <dbReference type="Rhea" id="RHEA:31451"/>
        <dbReference type="ChEBI" id="CHEBI:17754"/>
        <dbReference type="ChEBI" id="CHEBI:62237"/>
        <dbReference type="ChEBI" id="CHEBI:64716"/>
    </reaction>
</comment>
<comment type="subcellular location">
    <subcellularLocation>
        <location evidence="1">Cell membrane</location>
        <topology evidence="1">Peripheral membrane protein</topology>
    </subcellularLocation>
</comment>
<comment type="similarity">
    <text evidence="1">Belongs to the phospholipase D family. Cardiolipin synthase subfamily. ClsB sub-subfamily.</text>
</comment>
<organism>
    <name type="scientific">Salmonella typhi</name>
    <dbReference type="NCBI Taxonomy" id="90370"/>
    <lineage>
        <taxon>Bacteria</taxon>
        <taxon>Pseudomonadati</taxon>
        <taxon>Pseudomonadota</taxon>
        <taxon>Gammaproteobacteria</taxon>
        <taxon>Enterobacterales</taxon>
        <taxon>Enterobacteriaceae</taxon>
        <taxon>Salmonella</taxon>
    </lineage>
</organism>
<dbReference type="EC" id="2.7.8.-" evidence="1"/>
<dbReference type="EMBL" id="AL513382">
    <property type="protein sequence ID" value="CAD05259.1"/>
    <property type="molecule type" value="Genomic_DNA"/>
</dbReference>
<dbReference type="EMBL" id="AE014613">
    <property type="protein sequence ID" value="AAO69696.1"/>
    <property type="molecule type" value="Genomic_DNA"/>
</dbReference>
<dbReference type="RefSeq" id="NP_455350.1">
    <property type="nucleotide sequence ID" value="NC_003198.1"/>
</dbReference>
<dbReference type="RefSeq" id="WP_000649638.1">
    <property type="nucleotide sequence ID" value="NZ_WSUR01000021.1"/>
</dbReference>
<dbReference type="SMR" id="Q8Z883"/>
<dbReference type="STRING" id="220341.gene:17584849"/>
<dbReference type="KEGG" id="stt:t2076"/>
<dbReference type="KEGG" id="sty:STY0847"/>
<dbReference type="PATRIC" id="fig|220341.7.peg.852"/>
<dbReference type="eggNOG" id="COG1502">
    <property type="taxonomic scope" value="Bacteria"/>
</dbReference>
<dbReference type="HOGENOM" id="CLU_038053_0_0_6"/>
<dbReference type="OMA" id="INYSADH"/>
<dbReference type="OrthoDB" id="9762009at2"/>
<dbReference type="Proteomes" id="UP000000541">
    <property type="component" value="Chromosome"/>
</dbReference>
<dbReference type="Proteomes" id="UP000002670">
    <property type="component" value="Chromosome"/>
</dbReference>
<dbReference type="GO" id="GO:0005886">
    <property type="term" value="C:plasma membrane"/>
    <property type="evidence" value="ECO:0007669"/>
    <property type="project" value="UniProtKB-SubCell"/>
</dbReference>
<dbReference type="GO" id="GO:0008808">
    <property type="term" value="F:cardiolipin synthase activity"/>
    <property type="evidence" value="ECO:0007669"/>
    <property type="project" value="InterPro"/>
</dbReference>
<dbReference type="GO" id="GO:0032049">
    <property type="term" value="P:cardiolipin biosynthetic process"/>
    <property type="evidence" value="ECO:0007669"/>
    <property type="project" value="InterPro"/>
</dbReference>
<dbReference type="CDD" id="cd09110">
    <property type="entry name" value="PLDc_CLS_1"/>
    <property type="match status" value="1"/>
</dbReference>
<dbReference type="CDD" id="cd09159">
    <property type="entry name" value="PLDc_ybhO_like_2"/>
    <property type="match status" value="1"/>
</dbReference>
<dbReference type="FunFam" id="3.30.870.10:FF:000015">
    <property type="entry name" value="Cardiolipin synthase B"/>
    <property type="match status" value="1"/>
</dbReference>
<dbReference type="FunFam" id="3.30.870.10:FF:000016">
    <property type="entry name" value="Cardiolipin synthase B"/>
    <property type="match status" value="1"/>
</dbReference>
<dbReference type="Gene3D" id="3.30.870.10">
    <property type="entry name" value="Endonuclease Chain A"/>
    <property type="match status" value="2"/>
</dbReference>
<dbReference type="HAMAP" id="MF_01917">
    <property type="entry name" value="Cardiolipin_synth_ClsB"/>
    <property type="match status" value="1"/>
</dbReference>
<dbReference type="InterPro" id="IPR030872">
    <property type="entry name" value="Cardiolipin_synth_ClsB"/>
</dbReference>
<dbReference type="InterPro" id="IPR025202">
    <property type="entry name" value="PLD-like_dom"/>
</dbReference>
<dbReference type="InterPro" id="IPR001736">
    <property type="entry name" value="PLipase_D/transphosphatidylase"/>
</dbReference>
<dbReference type="NCBIfam" id="NF008427">
    <property type="entry name" value="PRK11263.1"/>
    <property type="match status" value="1"/>
</dbReference>
<dbReference type="PANTHER" id="PTHR21248">
    <property type="entry name" value="CARDIOLIPIN SYNTHASE"/>
    <property type="match status" value="1"/>
</dbReference>
<dbReference type="PANTHER" id="PTHR21248:SF23">
    <property type="entry name" value="CARDIOLIPIN SYNTHASE B"/>
    <property type="match status" value="1"/>
</dbReference>
<dbReference type="Pfam" id="PF13091">
    <property type="entry name" value="PLDc_2"/>
    <property type="match status" value="2"/>
</dbReference>
<dbReference type="SMART" id="SM00155">
    <property type="entry name" value="PLDc"/>
    <property type="match status" value="2"/>
</dbReference>
<dbReference type="SUPFAM" id="SSF56024">
    <property type="entry name" value="Phospholipase D/nuclease"/>
    <property type="match status" value="2"/>
</dbReference>
<dbReference type="PROSITE" id="PS50035">
    <property type="entry name" value="PLD"/>
    <property type="match status" value="2"/>
</dbReference>
<accession>Q8Z883</accession>
<gene>
    <name evidence="1" type="primary">clsB</name>
    <name type="synonym">ybhO</name>
    <name type="ordered locus">STY0847</name>
    <name type="ordered locus">t2076</name>
</gene>